<dbReference type="EMBL" id="AE017220">
    <property type="protein sequence ID" value="AAX64751.1"/>
    <property type="status" value="ALT_INIT"/>
    <property type="molecule type" value="Genomic_DNA"/>
</dbReference>
<dbReference type="RefSeq" id="WP_000936066.1">
    <property type="nucleotide sequence ID" value="NC_006905.1"/>
</dbReference>
<dbReference type="SMR" id="Q57RB0"/>
<dbReference type="KEGG" id="sec:SCH_0845"/>
<dbReference type="HOGENOM" id="CLU_036879_0_0_6"/>
<dbReference type="Proteomes" id="UP000000538">
    <property type="component" value="Chromosome"/>
</dbReference>
<dbReference type="GO" id="GO:0005886">
    <property type="term" value="C:plasma membrane"/>
    <property type="evidence" value="ECO:0007669"/>
    <property type="project" value="UniProtKB-SubCell"/>
</dbReference>
<dbReference type="GO" id="GO:0055085">
    <property type="term" value="P:transmembrane transport"/>
    <property type="evidence" value="ECO:0007669"/>
    <property type="project" value="InterPro"/>
</dbReference>
<dbReference type="CDD" id="cd06261">
    <property type="entry name" value="TM_PBP2"/>
    <property type="match status" value="1"/>
</dbReference>
<dbReference type="FunFam" id="1.10.3720.10:FF:000024">
    <property type="entry name" value="Glutathione ABC transporter permease GsiC"/>
    <property type="match status" value="1"/>
</dbReference>
<dbReference type="Gene3D" id="1.10.3720.10">
    <property type="entry name" value="MetI-like"/>
    <property type="match status" value="1"/>
</dbReference>
<dbReference type="InterPro" id="IPR045621">
    <property type="entry name" value="BPD_transp_1_N"/>
</dbReference>
<dbReference type="InterPro" id="IPR000515">
    <property type="entry name" value="MetI-like"/>
</dbReference>
<dbReference type="InterPro" id="IPR035906">
    <property type="entry name" value="MetI-like_sf"/>
</dbReference>
<dbReference type="NCBIfam" id="NF011661">
    <property type="entry name" value="PRK15081.1"/>
    <property type="match status" value="1"/>
</dbReference>
<dbReference type="PANTHER" id="PTHR43163">
    <property type="entry name" value="DIPEPTIDE TRANSPORT SYSTEM PERMEASE PROTEIN DPPB-RELATED"/>
    <property type="match status" value="1"/>
</dbReference>
<dbReference type="PANTHER" id="PTHR43163:SF5">
    <property type="entry name" value="GLUTATHIONE TRANSPORT SYSTEM PERMEASE PROTEIN GSIC"/>
    <property type="match status" value="1"/>
</dbReference>
<dbReference type="Pfam" id="PF00528">
    <property type="entry name" value="BPD_transp_1"/>
    <property type="match status" value="1"/>
</dbReference>
<dbReference type="Pfam" id="PF19300">
    <property type="entry name" value="BPD_transp_1_N"/>
    <property type="match status" value="1"/>
</dbReference>
<dbReference type="SUPFAM" id="SSF161098">
    <property type="entry name" value="MetI-like"/>
    <property type="match status" value="1"/>
</dbReference>
<dbReference type="PROSITE" id="PS50928">
    <property type="entry name" value="ABC_TM1"/>
    <property type="match status" value="1"/>
</dbReference>
<comment type="function">
    <text evidence="1">Part of the ABC transporter complex GsiABCD involved in glutathione import. Probably responsible for the translocation of the substrate across the membrane.</text>
</comment>
<comment type="subunit">
    <text evidence="1">The complex is composed of two ATP-binding proteins (GsiA), two transmembrane proteins (GsiC and GsiD) and a solute-binding protein (GsiB).</text>
</comment>
<comment type="subcellular location">
    <subcellularLocation>
        <location evidence="1">Cell inner membrane</location>
        <topology evidence="2">Multi-pass membrane protein</topology>
    </subcellularLocation>
</comment>
<comment type="similarity">
    <text evidence="4">Belongs to the binding-protein-dependent transport system permease family.</text>
</comment>
<comment type="sequence caution" evidence="4">
    <conflict type="erroneous initiation">
        <sequence resource="EMBL-CDS" id="AAX64751"/>
    </conflict>
</comment>
<keyword id="KW-0997">Cell inner membrane</keyword>
<keyword id="KW-1003">Cell membrane</keyword>
<keyword id="KW-0472">Membrane</keyword>
<keyword id="KW-0812">Transmembrane</keyword>
<keyword id="KW-1133">Transmembrane helix</keyword>
<keyword id="KW-0813">Transport</keyword>
<accession>Q57RB0</accession>
<protein>
    <recommendedName>
        <fullName evidence="1">Glutathione transport system permease protein GsiC</fullName>
    </recommendedName>
</protein>
<feature type="chain" id="PRO_0000279993" description="Glutathione transport system permease protein GsiC">
    <location>
        <begin position="1"/>
        <end position="306"/>
    </location>
</feature>
<feature type="topological domain" description="Cytoplasmic" evidence="2">
    <location>
        <begin position="1"/>
        <end position="8"/>
    </location>
</feature>
<feature type="transmembrane region" description="Helical" evidence="3">
    <location>
        <begin position="9"/>
        <end position="29"/>
    </location>
</feature>
<feature type="topological domain" description="Periplasmic" evidence="2">
    <location>
        <begin position="30"/>
        <end position="102"/>
    </location>
</feature>
<feature type="transmembrane region" description="Helical" evidence="3">
    <location>
        <begin position="103"/>
        <end position="123"/>
    </location>
</feature>
<feature type="topological domain" description="Cytoplasmic" evidence="2">
    <location>
        <begin position="124"/>
        <end position="134"/>
    </location>
</feature>
<feature type="transmembrane region" description="Helical" evidence="3">
    <location>
        <begin position="135"/>
        <end position="155"/>
    </location>
</feature>
<feature type="topological domain" description="Periplasmic" evidence="2">
    <location>
        <begin position="156"/>
        <end position="168"/>
    </location>
</feature>
<feature type="transmembrane region" description="Helical" evidence="3">
    <location>
        <begin position="169"/>
        <end position="189"/>
    </location>
</feature>
<feature type="topological domain" description="Cytoplasmic" evidence="2">
    <location>
        <begin position="190"/>
        <end position="228"/>
    </location>
</feature>
<feature type="transmembrane region" description="Helical" evidence="3">
    <location>
        <begin position="229"/>
        <end position="249"/>
    </location>
</feature>
<feature type="topological domain" description="Periplasmic" evidence="2">
    <location>
        <begin position="250"/>
        <end position="278"/>
    </location>
</feature>
<feature type="transmembrane region" description="Helical" evidence="3">
    <location>
        <begin position="279"/>
        <end position="299"/>
    </location>
</feature>
<feature type="topological domain" description="Cytoplasmic" evidence="2">
    <location>
        <begin position="300"/>
        <end position="306"/>
    </location>
</feature>
<feature type="domain" description="ABC transmembrane type-1" evidence="3">
    <location>
        <begin position="95"/>
        <end position="292"/>
    </location>
</feature>
<reference key="1">
    <citation type="journal article" date="2005" name="Nucleic Acids Res.">
        <title>The genome sequence of Salmonella enterica serovar Choleraesuis, a highly invasive and resistant zoonotic pathogen.</title>
        <authorList>
            <person name="Chiu C.-H."/>
            <person name="Tang P."/>
            <person name="Chu C."/>
            <person name="Hu S."/>
            <person name="Bao Q."/>
            <person name="Yu J."/>
            <person name="Chou Y.-Y."/>
            <person name="Wang H.-S."/>
            <person name="Lee Y.-S."/>
        </authorList>
    </citation>
    <scope>NUCLEOTIDE SEQUENCE [LARGE SCALE GENOMIC DNA]</scope>
    <source>
        <strain>SC-B67</strain>
    </source>
</reference>
<evidence type="ECO:0000250" key="1">
    <source>
        <dbReference type="UniProtKB" id="P75798"/>
    </source>
</evidence>
<evidence type="ECO:0000255" key="2"/>
<evidence type="ECO:0000255" key="3">
    <source>
        <dbReference type="PROSITE-ProRule" id="PRU00441"/>
    </source>
</evidence>
<evidence type="ECO:0000305" key="4"/>
<gene>
    <name evidence="1" type="primary">gsiC</name>
    <name type="ordered locus">SCH_0845</name>
</gene>
<name>GSIC_SALCH</name>
<sequence>MLNYVLKRLLGLIPTLLIVAVLVFLFVHLLPGDPARLIAGPEADAQVIALVRQQLGLDQPLHVQFWHYITHVLQGDFGTSMVSRRPVSEEIASRFLPTLWLTITSMIWAVLFGMAIGIAAAVWRNRWPDRVGMTLAVTGISFPAFALGMLLMQIFSVDLGWLPTVGADSWQHYILPSLTLGAAVASVMARFTRSSFVDVLSEDYMRTARAKGVSETWVVLKHGLRNAMIPVVTMMGLQFGFLLGGSIVVEKVFNWPGLGRLLVDSVDMRDYPVIQAEVLLFSLEFILINLVVDVLYAAINPAIRYK</sequence>
<proteinExistence type="inferred from homology"/>
<organism>
    <name type="scientific">Salmonella choleraesuis (strain SC-B67)</name>
    <dbReference type="NCBI Taxonomy" id="321314"/>
    <lineage>
        <taxon>Bacteria</taxon>
        <taxon>Pseudomonadati</taxon>
        <taxon>Pseudomonadota</taxon>
        <taxon>Gammaproteobacteria</taxon>
        <taxon>Enterobacterales</taxon>
        <taxon>Enterobacteriaceae</taxon>
        <taxon>Salmonella</taxon>
    </lineage>
</organism>